<accession>B1LH91</accession>
<keyword id="KW-0998">Cell outer membrane</keyword>
<keyword id="KW-0143">Chaperone</keyword>
<keyword id="KW-0449">Lipoprotein</keyword>
<keyword id="KW-0472">Membrane</keyword>
<keyword id="KW-0564">Palmitate</keyword>
<keyword id="KW-0653">Protein transport</keyword>
<keyword id="KW-0732">Signal</keyword>
<keyword id="KW-0813">Transport</keyword>
<evidence type="ECO:0000255" key="1">
    <source>
        <dbReference type="HAMAP-Rule" id="MF_00233"/>
    </source>
</evidence>
<comment type="function">
    <text evidence="1">Plays a critical role in the incorporation of lipoproteins in the outer membrane after they are released by the LolA protein.</text>
</comment>
<comment type="subunit">
    <text evidence="1">Monomer.</text>
</comment>
<comment type="subcellular location">
    <subcellularLocation>
        <location evidence="1">Cell outer membrane</location>
        <topology evidence="1">Lipid-anchor</topology>
    </subcellularLocation>
</comment>
<comment type="similarity">
    <text evidence="1">Belongs to the LolB family.</text>
</comment>
<gene>
    <name evidence="1" type="primary">lolB</name>
    <name type="ordered locus">EcSMS35_1933</name>
</gene>
<reference key="1">
    <citation type="journal article" date="2008" name="J. Bacteriol.">
        <title>Insights into the environmental resistance gene pool from the genome sequence of the multidrug-resistant environmental isolate Escherichia coli SMS-3-5.</title>
        <authorList>
            <person name="Fricke W.F."/>
            <person name="Wright M.S."/>
            <person name="Lindell A.H."/>
            <person name="Harkins D.M."/>
            <person name="Baker-Austin C."/>
            <person name="Ravel J."/>
            <person name="Stepanauskas R."/>
        </authorList>
    </citation>
    <scope>NUCLEOTIDE SEQUENCE [LARGE SCALE GENOMIC DNA]</scope>
    <source>
        <strain>SMS-3-5 / SECEC</strain>
    </source>
</reference>
<organism>
    <name type="scientific">Escherichia coli (strain SMS-3-5 / SECEC)</name>
    <dbReference type="NCBI Taxonomy" id="439855"/>
    <lineage>
        <taxon>Bacteria</taxon>
        <taxon>Pseudomonadati</taxon>
        <taxon>Pseudomonadota</taxon>
        <taxon>Gammaproteobacteria</taxon>
        <taxon>Enterobacterales</taxon>
        <taxon>Enterobacteriaceae</taxon>
        <taxon>Escherichia</taxon>
    </lineage>
</organism>
<sequence length="207" mass="23567">MPLPDFRLIRLLPLAALVLTACSVTTPKGPGKSPDSPQWRQHQQDVRNLNQYQTRGAFAYISDQQKVYARFFWQQTGQDRYRLLLTNPLGSTELELNAQPGNVQLVDNKGQRYTSDDAEEMIGKLTGMPIPLNSLRQWILGLPGDATDYKLDDQYRLSEITYSQNGKNWKVVYGGYDTKTQPAMPANMELTDGGQRIKLKMDNWIVK</sequence>
<dbReference type="EMBL" id="CP000970">
    <property type="protein sequence ID" value="ACB16007.1"/>
    <property type="molecule type" value="Genomic_DNA"/>
</dbReference>
<dbReference type="RefSeq" id="WP_001130698.1">
    <property type="nucleotide sequence ID" value="NC_010498.1"/>
</dbReference>
<dbReference type="BMRB" id="B1LH91"/>
<dbReference type="SMR" id="B1LH91"/>
<dbReference type="KEGG" id="ecm:EcSMS35_1933"/>
<dbReference type="HOGENOM" id="CLU_092816_1_1_6"/>
<dbReference type="Proteomes" id="UP000007011">
    <property type="component" value="Chromosome"/>
</dbReference>
<dbReference type="GO" id="GO:0009279">
    <property type="term" value="C:cell outer membrane"/>
    <property type="evidence" value="ECO:0007669"/>
    <property type="project" value="UniProtKB-SubCell"/>
</dbReference>
<dbReference type="GO" id="GO:0044874">
    <property type="term" value="P:lipoprotein localization to outer membrane"/>
    <property type="evidence" value="ECO:0007669"/>
    <property type="project" value="UniProtKB-UniRule"/>
</dbReference>
<dbReference type="GO" id="GO:0015031">
    <property type="term" value="P:protein transport"/>
    <property type="evidence" value="ECO:0007669"/>
    <property type="project" value="UniProtKB-KW"/>
</dbReference>
<dbReference type="CDD" id="cd16326">
    <property type="entry name" value="LolB"/>
    <property type="match status" value="1"/>
</dbReference>
<dbReference type="FunFam" id="2.50.20.10:FF:000002">
    <property type="entry name" value="Outer-membrane lipoprotein LolB"/>
    <property type="match status" value="1"/>
</dbReference>
<dbReference type="Gene3D" id="2.50.20.10">
    <property type="entry name" value="Lipoprotein localisation LolA/LolB/LppX"/>
    <property type="match status" value="1"/>
</dbReference>
<dbReference type="HAMAP" id="MF_00233">
    <property type="entry name" value="LolB"/>
    <property type="match status" value="1"/>
</dbReference>
<dbReference type="InterPro" id="IPR029046">
    <property type="entry name" value="LolA/LolB/LppX"/>
</dbReference>
<dbReference type="InterPro" id="IPR004565">
    <property type="entry name" value="OM_lipoprot_LolB"/>
</dbReference>
<dbReference type="NCBIfam" id="TIGR00548">
    <property type="entry name" value="lolB"/>
    <property type="match status" value="1"/>
</dbReference>
<dbReference type="Pfam" id="PF03550">
    <property type="entry name" value="LolB"/>
    <property type="match status" value="1"/>
</dbReference>
<dbReference type="SUPFAM" id="SSF89392">
    <property type="entry name" value="Prokaryotic lipoproteins and lipoprotein localization factors"/>
    <property type="match status" value="1"/>
</dbReference>
<dbReference type="PROSITE" id="PS51257">
    <property type="entry name" value="PROKAR_LIPOPROTEIN"/>
    <property type="match status" value="1"/>
</dbReference>
<feature type="signal peptide" evidence="1">
    <location>
        <begin position="1"/>
        <end position="21"/>
    </location>
</feature>
<feature type="chain" id="PRO_1000190854" description="Outer-membrane lipoprotein LolB">
    <location>
        <begin position="22"/>
        <end position="207"/>
    </location>
</feature>
<feature type="lipid moiety-binding region" description="N-palmitoyl cysteine" evidence="1">
    <location>
        <position position="22"/>
    </location>
</feature>
<feature type="lipid moiety-binding region" description="S-diacylglycerol cysteine" evidence="1">
    <location>
        <position position="22"/>
    </location>
</feature>
<protein>
    <recommendedName>
        <fullName evidence="1">Outer-membrane lipoprotein LolB</fullName>
    </recommendedName>
</protein>
<name>LOLB_ECOSM</name>
<proteinExistence type="inferred from homology"/>